<evidence type="ECO:0000255" key="1">
    <source>
        <dbReference type="HAMAP-Rule" id="MF_01147"/>
    </source>
</evidence>
<keyword id="KW-1003">Cell membrane</keyword>
<keyword id="KW-0472">Membrane</keyword>
<keyword id="KW-1185">Reference proteome</keyword>
<keyword id="KW-0808">Transferase</keyword>
<keyword id="KW-0812">Transmembrane</keyword>
<keyword id="KW-1133">Transmembrane helix</keyword>
<accession>Q8Y4G2</accession>
<proteinExistence type="inferred from homology"/>
<dbReference type="EC" id="2.5.1.145" evidence="1"/>
<dbReference type="EMBL" id="AL591983">
    <property type="protein sequence ID" value="CAD00560.1"/>
    <property type="molecule type" value="Genomic_DNA"/>
</dbReference>
<dbReference type="PIR" id="AB1385">
    <property type="entry name" value="AB1385"/>
</dbReference>
<dbReference type="RefSeq" id="NP_466005.1">
    <property type="nucleotide sequence ID" value="NC_003210.1"/>
</dbReference>
<dbReference type="RefSeq" id="WP_003722614.1">
    <property type="nucleotide sequence ID" value="NZ_CP149495.1"/>
</dbReference>
<dbReference type="SMR" id="Q8Y4G2"/>
<dbReference type="STRING" id="169963.gene:17595193"/>
<dbReference type="PaxDb" id="169963-lmo2482"/>
<dbReference type="EnsemblBacteria" id="CAD00560">
    <property type="protein sequence ID" value="CAD00560"/>
    <property type="gene ID" value="CAD00560"/>
</dbReference>
<dbReference type="GeneID" id="987331"/>
<dbReference type="KEGG" id="lmo:lmo2482"/>
<dbReference type="PATRIC" id="fig|169963.11.peg.2542"/>
<dbReference type="eggNOG" id="COG0682">
    <property type="taxonomic scope" value="Bacteria"/>
</dbReference>
<dbReference type="HOGENOM" id="CLU_013386_1_2_9"/>
<dbReference type="OrthoDB" id="871140at2"/>
<dbReference type="PhylomeDB" id="Q8Y4G2"/>
<dbReference type="BioCyc" id="LMON169963:LMO2482-MONOMER"/>
<dbReference type="UniPathway" id="UPA00664"/>
<dbReference type="Proteomes" id="UP000000817">
    <property type="component" value="Chromosome"/>
</dbReference>
<dbReference type="GO" id="GO:0005886">
    <property type="term" value="C:plasma membrane"/>
    <property type="evidence" value="ECO:0000318"/>
    <property type="project" value="GO_Central"/>
</dbReference>
<dbReference type="GO" id="GO:0008961">
    <property type="term" value="F:phosphatidylglycerol-prolipoprotein diacylglyceryl transferase activity"/>
    <property type="evidence" value="ECO:0000318"/>
    <property type="project" value="GO_Central"/>
</dbReference>
<dbReference type="GO" id="GO:0042158">
    <property type="term" value="P:lipoprotein biosynthetic process"/>
    <property type="evidence" value="ECO:0000318"/>
    <property type="project" value="GO_Central"/>
</dbReference>
<dbReference type="HAMAP" id="MF_01147">
    <property type="entry name" value="Lgt"/>
    <property type="match status" value="1"/>
</dbReference>
<dbReference type="InterPro" id="IPR001640">
    <property type="entry name" value="Lgt"/>
</dbReference>
<dbReference type="NCBIfam" id="TIGR00544">
    <property type="entry name" value="lgt"/>
    <property type="match status" value="1"/>
</dbReference>
<dbReference type="PANTHER" id="PTHR30589:SF0">
    <property type="entry name" value="PHOSPHATIDYLGLYCEROL--PROLIPOPROTEIN DIACYLGLYCERYL TRANSFERASE"/>
    <property type="match status" value="1"/>
</dbReference>
<dbReference type="PANTHER" id="PTHR30589">
    <property type="entry name" value="PROLIPOPROTEIN DIACYLGLYCERYL TRANSFERASE"/>
    <property type="match status" value="1"/>
</dbReference>
<dbReference type="Pfam" id="PF01790">
    <property type="entry name" value="LGT"/>
    <property type="match status" value="1"/>
</dbReference>
<dbReference type="PROSITE" id="PS01311">
    <property type="entry name" value="LGT"/>
    <property type="match status" value="1"/>
</dbReference>
<feature type="chain" id="PRO_0000172628" description="Phosphatidylglycerol--prolipoprotein diacylglyceryl transferase">
    <location>
        <begin position="1"/>
        <end position="277"/>
    </location>
</feature>
<feature type="transmembrane region" description="Helical" evidence="1">
    <location>
        <begin position="18"/>
        <end position="38"/>
    </location>
</feature>
<feature type="transmembrane region" description="Helical" evidence="1">
    <location>
        <begin position="51"/>
        <end position="71"/>
    </location>
</feature>
<feature type="transmembrane region" description="Helical" evidence="1">
    <location>
        <begin position="89"/>
        <end position="109"/>
    </location>
</feature>
<feature type="transmembrane region" description="Helical" evidence="1">
    <location>
        <begin position="116"/>
        <end position="136"/>
    </location>
</feature>
<feature type="transmembrane region" description="Helical" evidence="1">
    <location>
        <begin position="177"/>
        <end position="197"/>
    </location>
</feature>
<feature type="transmembrane region" description="Helical" evidence="1">
    <location>
        <begin position="205"/>
        <end position="225"/>
    </location>
</feature>
<feature type="transmembrane region" description="Helical" evidence="1">
    <location>
        <begin position="235"/>
        <end position="255"/>
    </location>
</feature>
<feature type="binding site" evidence="1">
    <location>
        <position position="137"/>
    </location>
    <ligand>
        <name>a 1,2-diacyl-sn-glycero-3-phospho-(1'-sn-glycerol)</name>
        <dbReference type="ChEBI" id="CHEBI:64716"/>
    </ligand>
</feature>
<name>LGT_LISMO</name>
<reference key="1">
    <citation type="journal article" date="2001" name="Science">
        <title>Comparative genomics of Listeria species.</title>
        <authorList>
            <person name="Glaser P."/>
            <person name="Frangeul L."/>
            <person name="Buchrieser C."/>
            <person name="Rusniok C."/>
            <person name="Amend A."/>
            <person name="Baquero F."/>
            <person name="Berche P."/>
            <person name="Bloecker H."/>
            <person name="Brandt P."/>
            <person name="Chakraborty T."/>
            <person name="Charbit A."/>
            <person name="Chetouani F."/>
            <person name="Couve E."/>
            <person name="de Daruvar A."/>
            <person name="Dehoux P."/>
            <person name="Domann E."/>
            <person name="Dominguez-Bernal G."/>
            <person name="Duchaud E."/>
            <person name="Durant L."/>
            <person name="Dussurget O."/>
            <person name="Entian K.-D."/>
            <person name="Fsihi H."/>
            <person name="Garcia-del Portillo F."/>
            <person name="Garrido P."/>
            <person name="Gautier L."/>
            <person name="Goebel W."/>
            <person name="Gomez-Lopez N."/>
            <person name="Hain T."/>
            <person name="Hauf J."/>
            <person name="Jackson D."/>
            <person name="Jones L.-M."/>
            <person name="Kaerst U."/>
            <person name="Kreft J."/>
            <person name="Kuhn M."/>
            <person name="Kunst F."/>
            <person name="Kurapkat G."/>
            <person name="Madueno E."/>
            <person name="Maitournam A."/>
            <person name="Mata Vicente J."/>
            <person name="Ng E."/>
            <person name="Nedjari H."/>
            <person name="Nordsiek G."/>
            <person name="Novella S."/>
            <person name="de Pablos B."/>
            <person name="Perez-Diaz J.-C."/>
            <person name="Purcell R."/>
            <person name="Remmel B."/>
            <person name="Rose M."/>
            <person name="Schlueter T."/>
            <person name="Simoes N."/>
            <person name="Tierrez A."/>
            <person name="Vazquez-Boland J.-A."/>
            <person name="Voss H."/>
            <person name="Wehland J."/>
            <person name="Cossart P."/>
        </authorList>
    </citation>
    <scope>NUCLEOTIDE SEQUENCE [LARGE SCALE GENOMIC DNA]</scope>
    <source>
        <strain>ATCC BAA-679 / EGD-e</strain>
    </source>
</reference>
<gene>
    <name evidence="1" type="primary">lgt</name>
    <name type="ordered locus">lmo2482</name>
</gene>
<comment type="function">
    <text evidence="1">Catalyzes the transfer of the diacylglyceryl group from phosphatidylglycerol to the sulfhydryl group of the N-terminal cysteine of a prolipoprotein, the first step in the formation of mature lipoproteins.</text>
</comment>
<comment type="catalytic activity">
    <reaction evidence="1">
        <text>L-cysteinyl-[prolipoprotein] + a 1,2-diacyl-sn-glycero-3-phospho-(1'-sn-glycerol) = an S-1,2-diacyl-sn-glyceryl-L-cysteinyl-[prolipoprotein] + sn-glycerol 1-phosphate + H(+)</text>
        <dbReference type="Rhea" id="RHEA:56712"/>
        <dbReference type="Rhea" id="RHEA-COMP:14679"/>
        <dbReference type="Rhea" id="RHEA-COMP:14680"/>
        <dbReference type="ChEBI" id="CHEBI:15378"/>
        <dbReference type="ChEBI" id="CHEBI:29950"/>
        <dbReference type="ChEBI" id="CHEBI:57685"/>
        <dbReference type="ChEBI" id="CHEBI:64716"/>
        <dbReference type="ChEBI" id="CHEBI:140658"/>
        <dbReference type="EC" id="2.5.1.145"/>
    </reaction>
</comment>
<comment type="pathway">
    <text evidence="1">Protein modification; lipoprotein biosynthesis (diacylglyceryl transfer).</text>
</comment>
<comment type="subcellular location">
    <subcellularLocation>
        <location evidence="1">Cell membrane</location>
        <topology evidence="1">Multi-pass membrane protein</topology>
    </subcellularLocation>
</comment>
<comment type="similarity">
    <text evidence="1">Belongs to the Lgt family.</text>
</comment>
<organism>
    <name type="scientific">Listeria monocytogenes serovar 1/2a (strain ATCC BAA-679 / EGD-e)</name>
    <dbReference type="NCBI Taxonomy" id="169963"/>
    <lineage>
        <taxon>Bacteria</taxon>
        <taxon>Bacillati</taxon>
        <taxon>Bacillota</taxon>
        <taxon>Bacilli</taxon>
        <taxon>Bacillales</taxon>
        <taxon>Listeriaceae</taxon>
        <taxon>Listeria</taxon>
    </lineage>
</organism>
<protein>
    <recommendedName>
        <fullName evidence="1">Phosphatidylglycerol--prolipoprotein diacylglyceryl transferase</fullName>
        <ecNumber evidence="1">2.5.1.145</ecNumber>
    </recommendedName>
</protein>
<sequence length="277" mass="31668">MGNGVQPLDPVAIQIGSISVKWYGVIIASAVVIALLLALSEANKRKMDKEIIVDLLIWAIPISIISARIYYVIFEWDFYKNNLGEIVKIWHGGIAIYGALIGAVLTAIIFSRIKKISFWQLADVVAPSLIIAQAIGRWGNFMNQEAHGAETTRSFLESLHLPDFIINQMYIDGAYYQPTFLYESLWNVLGFVILLIIRRTKIRRGELFLGYVIWYSFGRFFIEGMRTDSLMWGDFRVSQALSLLLIVLSIGIIIYRRLKMNPPYYMEDKFGKVVKKK</sequence>